<accession>Q63UT0</accession>
<evidence type="ECO:0000255" key="1">
    <source>
        <dbReference type="HAMAP-Rule" id="MF_00923"/>
    </source>
</evidence>
<comment type="function">
    <text evidence="1">Part of the outer membrane protein assembly complex, which is involved in assembly and insertion of beta-barrel proteins into the outer membrane.</text>
</comment>
<comment type="subunit">
    <text evidence="1">Part of the Bam complex.</text>
</comment>
<comment type="subcellular location">
    <subcellularLocation>
        <location evidence="1">Cell outer membrane</location>
        <topology evidence="1">Lipid-anchor</topology>
    </subcellularLocation>
</comment>
<comment type="similarity">
    <text evidence="1">Belongs to the BamB family.</text>
</comment>
<keyword id="KW-0998">Cell outer membrane</keyword>
<keyword id="KW-0449">Lipoprotein</keyword>
<keyword id="KW-0472">Membrane</keyword>
<keyword id="KW-0564">Palmitate</keyword>
<keyword id="KW-1185">Reference proteome</keyword>
<keyword id="KW-0732">Signal</keyword>
<feature type="signal peptide" evidence="1">
    <location>
        <begin position="1"/>
        <end position="22"/>
    </location>
</feature>
<feature type="chain" id="PRO_0000417678" description="Outer membrane protein assembly factor BamB">
    <location>
        <begin position="23"/>
        <end position="381"/>
    </location>
</feature>
<feature type="lipid moiety-binding region" description="N-palmitoyl cysteine" evidence="1">
    <location>
        <position position="23"/>
    </location>
</feature>
<feature type="lipid moiety-binding region" description="S-diacylglycerol cysteine" evidence="1">
    <location>
        <position position="23"/>
    </location>
</feature>
<protein>
    <recommendedName>
        <fullName evidence="1">Outer membrane protein assembly factor BamB</fullName>
    </recommendedName>
</protein>
<sequence>MNLLKRYAAPVACAAAVLVFAACSSTKDARRVPTPLTEFKPVLDVQQVWTASVGKGGRYSFSPVAVGDAVYVAGANGSVEKIDAKTGQQVWRTKIGSDLSAGVGSDGNLTAVGALKGGVFVLGPDGKQLWKATVQGEIFSPPLVGNGLVIVRTIDGQVIAFAAQTGEQKWTYRNRAVPLNLRVSAGMTFAGDAAVLAGFPGGGLVALNLQTGEPFWQTPVSFPKGVTEVERINDVTGAPTLVGAETCAVTFQGQLGCFDANSGRPLWEKPFSSRSGVAQDDTVVVGGDDWSVVSAYDVATGKALWRNDKLKSRDVGVPYLLGRAVVLGDYKGFVHFLSRDDGTFVARMKTDGSAIAAAPVLAGNTLVVLTQDGGVYGFRPR</sequence>
<proteinExistence type="inferred from homology"/>
<dbReference type="EMBL" id="BX571965">
    <property type="protein sequence ID" value="CAH35517.1"/>
    <property type="molecule type" value="Genomic_DNA"/>
</dbReference>
<dbReference type="RefSeq" id="WP_004193323.1">
    <property type="nucleotide sequence ID" value="NZ_CP009538.1"/>
</dbReference>
<dbReference type="RefSeq" id="YP_108136.1">
    <property type="nucleotide sequence ID" value="NC_006350.1"/>
</dbReference>
<dbReference type="SMR" id="Q63UT0"/>
<dbReference type="STRING" id="272560.BPSL1516"/>
<dbReference type="KEGG" id="bps:BPSL1516"/>
<dbReference type="PATRIC" id="fig|272560.51.peg.3553"/>
<dbReference type="eggNOG" id="COG1520">
    <property type="taxonomic scope" value="Bacteria"/>
</dbReference>
<dbReference type="Proteomes" id="UP000000605">
    <property type="component" value="Chromosome 1"/>
</dbReference>
<dbReference type="GO" id="GO:0009279">
    <property type="term" value="C:cell outer membrane"/>
    <property type="evidence" value="ECO:0007669"/>
    <property type="project" value="UniProtKB-SubCell"/>
</dbReference>
<dbReference type="GO" id="GO:0043165">
    <property type="term" value="P:Gram-negative-bacterium-type cell outer membrane assembly"/>
    <property type="evidence" value="ECO:0007669"/>
    <property type="project" value="UniProtKB-UniRule"/>
</dbReference>
<dbReference type="GO" id="GO:0051205">
    <property type="term" value="P:protein insertion into membrane"/>
    <property type="evidence" value="ECO:0007669"/>
    <property type="project" value="UniProtKB-UniRule"/>
</dbReference>
<dbReference type="Gene3D" id="2.130.10.10">
    <property type="entry name" value="YVTN repeat-like/Quinoprotein amine dehydrogenase"/>
    <property type="match status" value="1"/>
</dbReference>
<dbReference type="HAMAP" id="MF_00923">
    <property type="entry name" value="OM_assembly_BamB"/>
    <property type="match status" value="1"/>
</dbReference>
<dbReference type="InterPro" id="IPR017687">
    <property type="entry name" value="BamB"/>
</dbReference>
<dbReference type="InterPro" id="IPR018391">
    <property type="entry name" value="PQQ_b-propeller_rpt"/>
</dbReference>
<dbReference type="InterPro" id="IPR002372">
    <property type="entry name" value="PQQ_rpt_dom"/>
</dbReference>
<dbReference type="InterPro" id="IPR011047">
    <property type="entry name" value="Quinoprotein_ADH-like_sf"/>
</dbReference>
<dbReference type="InterPro" id="IPR015943">
    <property type="entry name" value="WD40/YVTN_repeat-like_dom_sf"/>
</dbReference>
<dbReference type="NCBIfam" id="TIGR03300">
    <property type="entry name" value="assembly_YfgL"/>
    <property type="match status" value="1"/>
</dbReference>
<dbReference type="PANTHER" id="PTHR34512">
    <property type="entry name" value="CELL SURFACE PROTEIN"/>
    <property type="match status" value="1"/>
</dbReference>
<dbReference type="PANTHER" id="PTHR34512:SF30">
    <property type="entry name" value="OUTER MEMBRANE PROTEIN ASSEMBLY FACTOR BAMB"/>
    <property type="match status" value="1"/>
</dbReference>
<dbReference type="Pfam" id="PF13360">
    <property type="entry name" value="PQQ_2"/>
    <property type="match status" value="1"/>
</dbReference>
<dbReference type="SMART" id="SM00564">
    <property type="entry name" value="PQQ"/>
    <property type="match status" value="6"/>
</dbReference>
<dbReference type="SUPFAM" id="SSF50998">
    <property type="entry name" value="Quinoprotein alcohol dehydrogenase-like"/>
    <property type="match status" value="1"/>
</dbReference>
<dbReference type="PROSITE" id="PS51257">
    <property type="entry name" value="PROKAR_LIPOPROTEIN"/>
    <property type="match status" value="1"/>
</dbReference>
<reference key="1">
    <citation type="journal article" date="2004" name="Proc. Natl. Acad. Sci. U.S.A.">
        <title>Genomic plasticity of the causative agent of melioidosis, Burkholderia pseudomallei.</title>
        <authorList>
            <person name="Holden M.T.G."/>
            <person name="Titball R.W."/>
            <person name="Peacock S.J."/>
            <person name="Cerdeno-Tarraga A.-M."/>
            <person name="Atkins T."/>
            <person name="Crossman L.C."/>
            <person name="Pitt T."/>
            <person name="Churcher C."/>
            <person name="Mungall K.L."/>
            <person name="Bentley S.D."/>
            <person name="Sebaihia M."/>
            <person name="Thomson N.R."/>
            <person name="Bason N."/>
            <person name="Beacham I.R."/>
            <person name="Brooks K."/>
            <person name="Brown K.A."/>
            <person name="Brown N.F."/>
            <person name="Challis G.L."/>
            <person name="Cherevach I."/>
            <person name="Chillingworth T."/>
            <person name="Cronin A."/>
            <person name="Crossett B."/>
            <person name="Davis P."/>
            <person name="DeShazer D."/>
            <person name="Feltwell T."/>
            <person name="Fraser A."/>
            <person name="Hance Z."/>
            <person name="Hauser H."/>
            <person name="Holroyd S."/>
            <person name="Jagels K."/>
            <person name="Keith K.E."/>
            <person name="Maddison M."/>
            <person name="Moule S."/>
            <person name="Price C."/>
            <person name="Quail M.A."/>
            <person name="Rabbinowitsch E."/>
            <person name="Rutherford K."/>
            <person name="Sanders M."/>
            <person name="Simmonds M."/>
            <person name="Songsivilai S."/>
            <person name="Stevens K."/>
            <person name="Tumapa S."/>
            <person name="Vesaratchavest M."/>
            <person name="Whitehead S."/>
            <person name="Yeats C."/>
            <person name="Barrell B.G."/>
            <person name="Oyston P.C.F."/>
            <person name="Parkhill J."/>
        </authorList>
    </citation>
    <scope>NUCLEOTIDE SEQUENCE [LARGE SCALE GENOMIC DNA]</scope>
    <source>
        <strain>K96243</strain>
    </source>
</reference>
<name>BAMB_BURPS</name>
<organism>
    <name type="scientific">Burkholderia pseudomallei (strain K96243)</name>
    <dbReference type="NCBI Taxonomy" id="272560"/>
    <lineage>
        <taxon>Bacteria</taxon>
        <taxon>Pseudomonadati</taxon>
        <taxon>Pseudomonadota</taxon>
        <taxon>Betaproteobacteria</taxon>
        <taxon>Burkholderiales</taxon>
        <taxon>Burkholderiaceae</taxon>
        <taxon>Burkholderia</taxon>
        <taxon>pseudomallei group</taxon>
    </lineage>
</organism>
<gene>
    <name evidence="1" type="primary">bamB</name>
    <name type="ordered locus">BPSL1516</name>
</gene>